<feature type="chain" id="PRO_0000168135" description="Putative AgrB-like protein">
    <location>
        <begin position="1"/>
        <end position="209"/>
    </location>
</feature>
<feature type="transmembrane region" description="Helical" evidence="1">
    <location>
        <begin position="49"/>
        <end position="71"/>
    </location>
</feature>
<feature type="transmembrane region" description="Helical" evidence="1">
    <location>
        <begin position="82"/>
        <end position="102"/>
    </location>
</feature>
<feature type="transmembrane region" description="Helical" evidence="1">
    <location>
        <begin position="105"/>
        <end position="125"/>
    </location>
</feature>
<feature type="transmembrane region" description="Helical" evidence="1">
    <location>
        <begin position="149"/>
        <end position="169"/>
    </location>
</feature>
<feature type="transmembrane region" description="Helical" evidence="1">
    <location>
        <begin position="173"/>
        <end position="193"/>
    </location>
</feature>
<proteinExistence type="inferred from homology"/>
<protein>
    <recommendedName>
        <fullName evidence="1">Putative AgrB-like protein</fullName>
        <ecNumber evidence="1">3.4.-.-</ecNumber>
    </recommendedName>
</protein>
<comment type="function">
    <text evidence="1">May be involved in the proteolytic processing of a quorum sensing system signal molecule precursor.</text>
</comment>
<comment type="subcellular location">
    <subcellularLocation>
        <location evidence="1">Cell membrane</location>
        <topology evidence="1">Multi-pass membrane protein</topology>
    </subcellularLocation>
</comment>
<comment type="similarity">
    <text evidence="1">Belongs to the AgrB family.</text>
</comment>
<dbReference type="EC" id="3.4.-.-" evidence="1"/>
<dbReference type="EMBL" id="AE001437">
    <property type="protein sequence ID" value="AAK78063.1"/>
    <property type="molecule type" value="Genomic_DNA"/>
</dbReference>
<dbReference type="PIR" id="D96909">
    <property type="entry name" value="D96909"/>
</dbReference>
<dbReference type="RefSeq" id="NP_346723.1">
    <property type="nucleotide sequence ID" value="NC_003030.1"/>
</dbReference>
<dbReference type="RefSeq" id="WP_010963405.1">
    <property type="nucleotide sequence ID" value="NC_003030.1"/>
</dbReference>
<dbReference type="STRING" id="272562.CA_C0078"/>
<dbReference type="KEGG" id="cac:CA_C0078"/>
<dbReference type="PATRIC" id="fig|272562.8.peg.261"/>
<dbReference type="eggNOG" id="COG4512">
    <property type="taxonomic scope" value="Bacteria"/>
</dbReference>
<dbReference type="HOGENOM" id="CLU_098969_2_2_9"/>
<dbReference type="OrthoDB" id="2360675at2"/>
<dbReference type="Proteomes" id="UP000000814">
    <property type="component" value="Chromosome"/>
</dbReference>
<dbReference type="GO" id="GO:0005886">
    <property type="term" value="C:plasma membrane"/>
    <property type="evidence" value="ECO:0007669"/>
    <property type="project" value="UniProtKB-SubCell"/>
</dbReference>
<dbReference type="GO" id="GO:0008233">
    <property type="term" value="F:peptidase activity"/>
    <property type="evidence" value="ECO:0007669"/>
    <property type="project" value="UniProtKB-UniRule"/>
</dbReference>
<dbReference type="GO" id="GO:0006508">
    <property type="term" value="P:proteolysis"/>
    <property type="evidence" value="ECO:0007669"/>
    <property type="project" value="UniProtKB-KW"/>
</dbReference>
<dbReference type="GO" id="GO:0009372">
    <property type="term" value="P:quorum sensing"/>
    <property type="evidence" value="ECO:0007669"/>
    <property type="project" value="UniProtKB-UniRule"/>
</dbReference>
<dbReference type="HAMAP" id="MF_00784">
    <property type="entry name" value="AgrB"/>
    <property type="match status" value="1"/>
</dbReference>
<dbReference type="InterPro" id="IPR006741">
    <property type="entry name" value="AgrB"/>
</dbReference>
<dbReference type="NCBIfam" id="NF002210">
    <property type="entry name" value="PRK01100.1"/>
    <property type="match status" value="1"/>
</dbReference>
<dbReference type="Pfam" id="PF04647">
    <property type="entry name" value="AgrB"/>
    <property type="match status" value="1"/>
</dbReference>
<dbReference type="SMART" id="SM00793">
    <property type="entry name" value="AgrB"/>
    <property type="match status" value="1"/>
</dbReference>
<keyword id="KW-1003">Cell membrane</keyword>
<keyword id="KW-0378">Hydrolase</keyword>
<keyword id="KW-0472">Membrane</keyword>
<keyword id="KW-0645">Protease</keyword>
<keyword id="KW-0673">Quorum sensing</keyword>
<keyword id="KW-1185">Reference proteome</keyword>
<keyword id="KW-0812">Transmembrane</keyword>
<keyword id="KW-1133">Transmembrane helix</keyword>
<accession>Q97MW3</accession>
<name>AGRB_CLOAB</name>
<sequence length="209" mass="23750">MKGKSSVMEKLAEVVSLKLNKHLKMEGIELIKLKLGVEIIFINISKLAILFLVSYYFGLIKETIIMLAAFGFLRSNAFGLHAKNSIVCTVMSLLMFVLGAYLSKYLLFNNYMVLASFIIVNLLLFRYAPGDTEAHPLVGAKLRDKLKKQAVLMGMLLMAITLIIPDELIKTCISLSSYFEIISILPITYKVLGRRYKNYYEFERTIKQS</sequence>
<evidence type="ECO:0000255" key="1">
    <source>
        <dbReference type="HAMAP-Rule" id="MF_00784"/>
    </source>
</evidence>
<reference key="1">
    <citation type="journal article" date="2001" name="J. Bacteriol.">
        <title>Genome sequence and comparative analysis of the solvent-producing bacterium Clostridium acetobutylicum.</title>
        <authorList>
            <person name="Noelling J."/>
            <person name="Breton G."/>
            <person name="Omelchenko M.V."/>
            <person name="Makarova K.S."/>
            <person name="Zeng Q."/>
            <person name="Gibson R."/>
            <person name="Lee H.M."/>
            <person name="Dubois J."/>
            <person name="Qiu D."/>
            <person name="Hitti J."/>
            <person name="Wolf Y.I."/>
            <person name="Tatusov R.L."/>
            <person name="Sabathe F."/>
            <person name="Doucette-Stamm L.A."/>
            <person name="Soucaille P."/>
            <person name="Daly M.J."/>
            <person name="Bennett G.N."/>
            <person name="Koonin E.V."/>
            <person name="Smith D.R."/>
        </authorList>
    </citation>
    <scope>NUCLEOTIDE SEQUENCE [LARGE SCALE GENOMIC DNA]</scope>
    <source>
        <strain>ATCC 824 / DSM 792 / JCM 1419 / IAM 19013 / LMG 5710 / NBRC 13948 / NRRL B-527 / VKM B-1787 / 2291 / W</strain>
    </source>
</reference>
<organism>
    <name type="scientific">Clostridium acetobutylicum (strain ATCC 824 / DSM 792 / JCM 1419 / IAM 19013 / LMG 5710 / NBRC 13948 / NRRL B-527 / VKM B-1787 / 2291 / W)</name>
    <dbReference type="NCBI Taxonomy" id="272562"/>
    <lineage>
        <taxon>Bacteria</taxon>
        <taxon>Bacillati</taxon>
        <taxon>Bacillota</taxon>
        <taxon>Clostridia</taxon>
        <taxon>Eubacteriales</taxon>
        <taxon>Clostridiaceae</taxon>
        <taxon>Clostridium</taxon>
    </lineage>
</organism>
<gene>
    <name type="ordered locus">CA_C0078</name>
</gene>